<reference key="1">
    <citation type="journal article" date="2004" name="J. Bacteriol.">
        <title>Comparative genomics of two Leptospira interrogans serovars reveals novel insights into physiology and pathogenesis.</title>
        <authorList>
            <person name="Nascimento A.L.T.O."/>
            <person name="Ko A.I."/>
            <person name="Martins E.A.L."/>
            <person name="Monteiro-Vitorello C.B."/>
            <person name="Ho P.L."/>
            <person name="Haake D.A."/>
            <person name="Verjovski-Almeida S."/>
            <person name="Hartskeerl R.A."/>
            <person name="Marques M.V."/>
            <person name="Oliveira M.C."/>
            <person name="Menck C.F.M."/>
            <person name="Leite L.C.C."/>
            <person name="Carrer H."/>
            <person name="Coutinho L.L."/>
            <person name="Degrave W.M."/>
            <person name="Dellagostin O.A."/>
            <person name="El-Dorry H."/>
            <person name="Ferro E.S."/>
            <person name="Ferro M.I.T."/>
            <person name="Furlan L.R."/>
            <person name="Gamberini M."/>
            <person name="Giglioti E.A."/>
            <person name="Goes-Neto A."/>
            <person name="Goldman G.H."/>
            <person name="Goldman M.H.S."/>
            <person name="Harakava R."/>
            <person name="Jeronimo S.M.B."/>
            <person name="Junqueira-de-Azevedo I.L.M."/>
            <person name="Kimura E.T."/>
            <person name="Kuramae E.E."/>
            <person name="Lemos E.G.M."/>
            <person name="Lemos M.V.F."/>
            <person name="Marino C.L."/>
            <person name="Nunes L.R."/>
            <person name="de Oliveira R.C."/>
            <person name="Pereira G.G."/>
            <person name="Reis M.S."/>
            <person name="Schriefer A."/>
            <person name="Siqueira W.J."/>
            <person name="Sommer P."/>
            <person name="Tsai S.M."/>
            <person name="Simpson A.J.G."/>
            <person name="Ferro J.A."/>
            <person name="Camargo L.E.A."/>
            <person name="Kitajima J.P."/>
            <person name="Setubal J.C."/>
            <person name="Van Sluys M.A."/>
        </authorList>
    </citation>
    <scope>NUCLEOTIDE SEQUENCE [LARGE SCALE GENOMIC DNA]</scope>
    <source>
        <strain>Fiocruz L1-130</strain>
    </source>
</reference>
<feature type="chain" id="PRO_0000166825" description="Peptide chain release factor 2">
    <location>
        <begin position="1"/>
        <end position="367"/>
    </location>
</feature>
<feature type="modified residue" description="N5-methylglutamine" evidence="1">
    <location>
        <position position="254"/>
    </location>
</feature>
<protein>
    <recommendedName>
        <fullName evidence="1">Peptide chain release factor 2</fullName>
        <shortName evidence="1">RF-2</shortName>
    </recommendedName>
</protein>
<name>RF2_LEPIC</name>
<comment type="function">
    <text evidence="1">Peptide chain release factor 2 directs the termination of translation in response to the peptide chain termination codons UGA and UAA.</text>
</comment>
<comment type="subcellular location">
    <subcellularLocation>
        <location evidence="1">Cytoplasm</location>
    </subcellularLocation>
</comment>
<comment type="PTM">
    <text evidence="1">Methylated by PrmC. Methylation increases the termination efficiency of RF2.</text>
</comment>
<comment type="similarity">
    <text evidence="1">Belongs to the prokaryotic/mitochondrial release factor family.</text>
</comment>
<accession>Q72V33</accession>
<proteinExistence type="inferred from homology"/>
<evidence type="ECO:0000255" key="1">
    <source>
        <dbReference type="HAMAP-Rule" id="MF_00094"/>
    </source>
</evidence>
<gene>
    <name evidence="1" type="primary">prfB</name>
    <name type="ordered locus">LIC_10470</name>
</gene>
<sequence>MEVKSAKELKRISKELQENFLNRWKLLNLEQDKDRLKSLTEKAEDPNLWNNPEEARLVSQKKNELEKKLNPWFTIQQDILDFPDLVDLTLDEKGENGVGELSSEYNRLQEKFEELELLGALKNPEDLKPAFLNIHPGAGGTESQDWAEMLLRMYTRYFEKKGYQYSLIDVQAGDGAGIKNATLHVIGDFAFGFLKGENGVHRLVRISPFDANKRRHTSFVSVHVSPEIDDDIDIKIEEKDIRVDVYRSSGAGGQHVNTTDSAVRITHMPSGIVVACQNERSQIKNRDTAFKMLKARLYELEQEKAKEELEKKSGEKKDITWGSQIRSYVFHPYNLVKDHRTDHETGNVAAVMDGDIEPFILAYLKTL</sequence>
<dbReference type="EMBL" id="AE016823">
    <property type="protein sequence ID" value="AAS69091.1"/>
    <property type="molecule type" value="Genomic_DNA"/>
</dbReference>
<dbReference type="RefSeq" id="WP_000453256.1">
    <property type="nucleotide sequence ID" value="NC_005823.1"/>
</dbReference>
<dbReference type="SMR" id="Q72V33"/>
<dbReference type="GeneID" id="61143822"/>
<dbReference type="KEGG" id="lic:LIC_10470"/>
<dbReference type="HOGENOM" id="CLU_036856_6_0_12"/>
<dbReference type="Proteomes" id="UP000007037">
    <property type="component" value="Chromosome I"/>
</dbReference>
<dbReference type="GO" id="GO:0005737">
    <property type="term" value="C:cytoplasm"/>
    <property type="evidence" value="ECO:0007669"/>
    <property type="project" value="UniProtKB-SubCell"/>
</dbReference>
<dbReference type="GO" id="GO:0016149">
    <property type="term" value="F:translation release factor activity, codon specific"/>
    <property type="evidence" value="ECO:0007669"/>
    <property type="project" value="UniProtKB-UniRule"/>
</dbReference>
<dbReference type="FunFam" id="3.30.160.20:FF:000010">
    <property type="entry name" value="Peptide chain release factor 2"/>
    <property type="match status" value="1"/>
</dbReference>
<dbReference type="Gene3D" id="3.30.160.20">
    <property type="match status" value="1"/>
</dbReference>
<dbReference type="Gene3D" id="3.30.70.1660">
    <property type="match status" value="1"/>
</dbReference>
<dbReference type="Gene3D" id="1.20.58.410">
    <property type="entry name" value="Release factor"/>
    <property type="match status" value="1"/>
</dbReference>
<dbReference type="HAMAP" id="MF_00094">
    <property type="entry name" value="Rel_fac_2"/>
    <property type="match status" value="1"/>
</dbReference>
<dbReference type="InterPro" id="IPR005139">
    <property type="entry name" value="PCRF"/>
</dbReference>
<dbReference type="InterPro" id="IPR000352">
    <property type="entry name" value="Pep_chain_release_fac_I"/>
</dbReference>
<dbReference type="InterPro" id="IPR045853">
    <property type="entry name" value="Pep_chain_release_fac_I_sf"/>
</dbReference>
<dbReference type="InterPro" id="IPR004374">
    <property type="entry name" value="PrfB"/>
</dbReference>
<dbReference type="NCBIfam" id="TIGR00020">
    <property type="entry name" value="prfB"/>
    <property type="match status" value="1"/>
</dbReference>
<dbReference type="PANTHER" id="PTHR43116:SF3">
    <property type="entry name" value="CLASS I PEPTIDE CHAIN RELEASE FACTOR"/>
    <property type="match status" value="1"/>
</dbReference>
<dbReference type="PANTHER" id="PTHR43116">
    <property type="entry name" value="PEPTIDE CHAIN RELEASE FACTOR 2"/>
    <property type="match status" value="1"/>
</dbReference>
<dbReference type="Pfam" id="PF03462">
    <property type="entry name" value="PCRF"/>
    <property type="match status" value="1"/>
</dbReference>
<dbReference type="Pfam" id="PF00472">
    <property type="entry name" value="RF-1"/>
    <property type="match status" value="1"/>
</dbReference>
<dbReference type="SMART" id="SM00937">
    <property type="entry name" value="PCRF"/>
    <property type="match status" value="1"/>
</dbReference>
<dbReference type="SUPFAM" id="SSF75620">
    <property type="entry name" value="Release factor"/>
    <property type="match status" value="1"/>
</dbReference>
<dbReference type="PROSITE" id="PS00745">
    <property type="entry name" value="RF_PROK_I"/>
    <property type="match status" value="1"/>
</dbReference>
<keyword id="KW-0963">Cytoplasm</keyword>
<keyword id="KW-0488">Methylation</keyword>
<keyword id="KW-0648">Protein biosynthesis</keyword>
<organism>
    <name type="scientific">Leptospira interrogans serogroup Icterohaemorrhagiae serovar copenhageni (strain Fiocruz L1-130)</name>
    <dbReference type="NCBI Taxonomy" id="267671"/>
    <lineage>
        <taxon>Bacteria</taxon>
        <taxon>Pseudomonadati</taxon>
        <taxon>Spirochaetota</taxon>
        <taxon>Spirochaetia</taxon>
        <taxon>Leptospirales</taxon>
        <taxon>Leptospiraceae</taxon>
        <taxon>Leptospira</taxon>
    </lineage>
</organism>